<sequence>MFLRLFKYLWPERYLPETPAQDPFDENPPPCGPGRVGVLLVNLGTPDEPTRGAIRRYLGEFLSDPRVIEIPRYLWMPILHGLVLTMRPKKLAPRYAGIWMEEGSPLLVYSQRQAAGVRQGLAARGVHAEVELAMRYGKPSIPAAITALRERGCDHILAVPLYPQYAASTTATVVDAVTRHAGRLRDQPALRFVKRFHNDPAYVEAQAGRIAEFWQAHGRPQKLVMSFHGLPRYSIELGDPYYRDCLDTARLLRERLGLREDEVEVTFQSRFGSARWLEPYTEPTLAELARQGVTEVDVVCPGFVADCLETLEEISQECRDAFVAAGGRQFRYIPALNDCPPWIEGLTDLVERQLRGWPTGNP</sequence>
<feature type="chain" id="PRO_0000175118" description="Ferrochelatase">
    <location>
        <begin position="1"/>
        <end position="362"/>
    </location>
</feature>
<feature type="binding site" evidence="1">
    <location>
        <position position="228"/>
    </location>
    <ligand>
        <name>Fe cation</name>
        <dbReference type="ChEBI" id="CHEBI:24875"/>
    </ligand>
</feature>
<feature type="binding site" evidence="1">
    <location>
        <position position="309"/>
    </location>
    <ligand>
        <name>Fe cation</name>
        <dbReference type="ChEBI" id="CHEBI:24875"/>
    </ligand>
</feature>
<evidence type="ECO:0000255" key="1">
    <source>
        <dbReference type="HAMAP-Rule" id="MF_00323"/>
    </source>
</evidence>
<evidence type="ECO:0000305" key="2"/>
<reference key="1">
    <citation type="journal article" date="2003" name="Nat. Genet.">
        <title>Comparative analysis of the genome sequences of Bordetella pertussis, Bordetella parapertussis and Bordetella bronchiseptica.</title>
        <authorList>
            <person name="Parkhill J."/>
            <person name="Sebaihia M."/>
            <person name="Preston A."/>
            <person name="Murphy L.D."/>
            <person name="Thomson N.R."/>
            <person name="Harris D.E."/>
            <person name="Holden M.T.G."/>
            <person name="Churcher C.M."/>
            <person name="Bentley S.D."/>
            <person name="Mungall K.L."/>
            <person name="Cerdeno-Tarraga A.-M."/>
            <person name="Temple L."/>
            <person name="James K.D."/>
            <person name="Harris B."/>
            <person name="Quail M.A."/>
            <person name="Achtman M."/>
            <person name="Atkin R."/>
            <person name="Baker S."/>
            <person name="Basham D."/>
            <person name="Bason N."/>
            <person name="Cherevach I."/>
            <person name="Chillingworth T."/>
            <person name="Collins M."/>
            <person name="Cronin A."/>
            <person name="Davis P."/>
            <person name="Doggett J."/>
            <person name="Feltwell T."/>
            <person name="Goble A."/>
            <person name="Hamlin N."/>
            <person name="Hauser H."/>
            <person name="Holroyd S."/>
            <person name="Jagels K."/>
            <person name="Leather S."/>
            <person name="Moule S."/>
            <person name="Norberczak H."/>
            <person name="O'Neil S."/>
            <person name="Ormond D."/>
            <person name="Price C."/>
            <person name="Rabbinowitsch E."/>
            <person name="Rutter S."/>
            <person name="Sanders M."/>
            <person name="Saunders D."/>
            <person name="Seeger K."/>
            <person name="Sharp S."/>
            <person name="Simmonds M."/>
            <person name="Skelton J."/>
            <person name="Squares R."/>
            <person name="Squares S."/>
            <person name="Stevens K."/>
            <person name="Unwin L."/>
            <person name="Whitehead S."/>
            <person name="Barrell B.G."/>
            <person name="Maskell D.J."/>
        </authorList>
    </citation>
    <scope>NUCLEOTIDE SEQUENCE [LARGE SCALE GENOMIC DNA]</scope>
    <source>
        <strain>Tohama I / ATCC BAA-589 / NCTC 13251</strain>
    </source>
</reference>
<gene>
    <name evidence="1" type="primary">hemH</name>
    <name type="ordered locus">BP2503</name>
</gene>
<organism>
    <name type="scientific">Bordetella pertussis (strain Tohama I / ATCC BAA-589 / NCTC 13251)</name>
    <dbReference type="NCBI Taxonomy" id="257313"/>
    <lineage>
        <taxon>Bacteria</taxon>
        <taxon>Pseudomonadati</taxon>
        <taxon>Pseudomonadota</taxon>
        <taxon>Betaproteobacteria</taxon>
        <taxon>Burkholderiales</taxon>
        <taxon>Alcaligenaceae</taxon>
        <taxon>Bordetella</taxon>
    </lineage>
</organism>
<keyword id="KW-0963">Cytoplasm</keyword>
<keyword id="KW-0350">Heme biosynthesis</keyword>
<keyword id="KW-0408">Iron</keyword>
<keyword id="KW-0456">Lyase</keyword>
<keyword id="KW-0479">Metal-binding</keyword>
<keyword id="KW-0627">Porphyrin biosynthesis</keyword>
<keyword id="KW-1185">Reference proteome</keyword>
<proteinExistence type="inferred from homology"/>
<protein>
    <recommendedName>
        <fullName evidence="1">Ferrochelatase</fullName>
        <ecNumber evidence="1">4.98.1.1</ecNumber>
    </recommendedName>
    <alternativeName>
        <fullName evidence="1">Heme synthase</fullName>
    </alternativeName>
    <alternativeName>
        <fullName evidence="1">Protoheme ferro-lyase</fullName>
    </alternativeName>
</protein>
<accession>Q7VVX8</accession>
<dbReference type="EC" id="4.98.1.1" evidence="1"/>
<dbReference type="EMBL" id="BX640418">
    <property type="protein sequence ID" value="CAE42775.1"/>
    <property type="status" value="ALT_INIT"/>
    <property type="molecule type" value="Genomic_DNA"/>
</dbReference>
<dbReference type="RefSeq" id="NP_881130.1">
    <property type="nucleotide sequence ID" value="NC_002929.2"/>
</dbReference>
<dbReference type="RefSeq" id="WP_023853055.1">
    <property type="nucleotide sequence ID" value="NZ_CP039022.1"/>
</dbReference>
<dbReference type="SMR" id="Q7VVX8"/>
<dbReference type="STRING" id="257313.BP2503"/>
<dbReference type="PaxDb" id="257313-BP2503"/>
<dbReference type="GeneID" id="69602404"/>
<dbReference type="KEGG" id="bpe:BP2503"/>
<dbReference type="PATRIC" id="fig|257313.5.peg.2701"/>
<dbReference type="eggNOG" id="COG0276">
    <property type="taxonomic scope" value="Bacteria"/>
</dbReference>
<dbReference type="HOGENOM" id="CLU_018884_0_0_4"/>
<dbReference type="UniPathway" id="UPA00252">
    <property type="reaction ID" value="UER00325"/>
</dbReference>
<dbReference type="Proteomes" id="UP000002676">
    <property type="component" value="Chromosome"/>
</dbReference>
<dbReference type="GO" id="GO:0005737">
    <property type="term" value="C:cytoplasm"/>
    <property type="evidence" value="ECO:0007669"/>
    <property type="project" value="UniProtKB-SubCell"/>
</dbReference>
<dbReference type="GO" id="GO:0004325">
    <property type="term" value="F:ferrochelatase activity"/>
    <property type="evidence" value="ECO:0007669"/>
    <property type="project" value="UniProtKB-UniRule"/>
</dbReference>
<dbReference type="GO" id="GO:0046872">
    <property type="term" value="F:metal ion binding"/>
    <property type="evidence" value="ECO:0007669"/>
    <property type="project" value="UniProtKB-KW"/>
</dbReference>
<dbReference type="GO" id="GO:0006783">
    <property type="term" value="P:heme biosynthetic process"/>
    <property type="evidence" value="ECO:0007669"/>
    <property type="project" value="UniProtKB-UniRule"/>
</dbReference>
<dbReference type="CDD" id="cd00419">
    <property type="entry name" value="Ferrochelatase_C"/>
    <property type="match status" value="1"/>
</dbReference>
<dbReference type="CDD" id="cd03411">
    <property type="entry name" value="Ferrochelatase_N"/>
    <property type="match status" value="1"/>
</dbReference>
<dbReference type="FunFam" id="3.40.50.1400:FF:000002">
    <property type="entry name" value="Ferrochelatase"/>
    <property type="match status" value="1"/>
</dbReference>
<dbReference type="Gene3D" id="3.40.50.1400">
    <property type="match status" value="2"/>
</dbReference>
<dbReference type="HAMAP" id="MF_00323">
    <property type="entry name" value="Ferrochelatase"/>
    <property type="match status" value="1"/>
</dbReference>
<dbReference type="InterPro" id="IPR001015">
    <property type="entry name" value="Ferrochelatase"/>
</dbReference>
<dbReference type="InterPro" id="IPR019772">
    <property type="entry name" value="Ferrochelatase_AS"/>
</dbReference>
<dbReference type="InterPro" id="IPR033644">
    <property type="entry name" value="Ferrochelatase_C"/>
</dbReference>
<dbReference type="InterPro" id="IPR033659">
    <property type="entry name" value="Ferrochelatase_N"/>
</dbReference>
<dbReference type="NCBIfam" id="TIGR00109">
    <property type="entry name" value="hemH"/>
    <property type="match status" value="1"/>
</dbReference>
<dbReference type="PANTHER" id="PTHR11108">
    <property type="entry name" value="FERROCHELATASE"/>
    <property type="match status" value="1"/>
</dbReference>
<dbReference type="PANTHER" id="PTHR11108:SF1">
    <property type="entry name" value="FERROCHELATASE, MITOCHONDRIAL"/>
    <property type="match status" value="1"/>
</dbReference>
<dbReference type="Pfam" id="PF00762">
    <property type="entry name" value="Ferrochelatase"/>
    <property type="match status" value="1"/>
</dbReference>
<dbReference type="SUPFAM" id="SSF53800">
    <property type="entry name" value="Chelatase"/>
    <property type="match status" value="1"/>
</dbReference>
<dbReference type="PROSITE" id="PS00534">
    <property type="entry name" value="FERROCHELATASE"/>
    <property type="match status" value="1"/>
</dbReference>
<name>HEMH_BORPE</name>
<comment type="function">
    <text evidence="1">Catalyzes the ferrous insertion into protoporphyrin IX.</text>
</comment>
<comment type="catalytic activity">
    <reaction evidence="1">
        <text>heme b + 2 H(+) = protoporphyrin IX + Fe(2+)</text>
        <dbReference type="Rhea" id="RHEA:22584"/>
        <dbReference type="ChEBI" id="CHEBI:15378"/>
        <dbReference type="ChEBI" id="CHEBI:29033"/>
        <dbReference type="ChEBI" id="CHEBI:57306"/>
        <dbReference type="ChEBI" id="CHEBI:60344"/>
        <dbReference type="EC" id="4.98.1.1"/>
    </reaction>
</comment>
<comment type="pathway">
    <text evidence="1">Porphyrin-containing compound metabolism; protoheme biosynthesis; protoheme from protoporphyrin-IX: step 1/1.</text>
</comment>
<comment type="subcellular location">
    <subcellularLocation>
        <location evidence="1">Cytoplasm</location>
    </subcellularLocation>
</comment>
<comment type="similarity">
    <text evidence="1">Belongs to the ferrochelatase family.</text>
</comment>
<comment type="sequence caution" evidence="2">
    <conflict type="erroneous initiation">
        <sequence resource="EMBL-CDS" id="CAE42775"/>
    </conflict>
</comment>